<proteinExistence type="evidence at protein level"/>
<dbReference type="EMBL" id="AJ429498">
    <property type="protein sequence ID" value="CAD22344.1"/>
    <property type="molecule type" value="mRNA"/>
</dbReference>
<dbReference type="EMBL" id="AF479749">
    <property type="protein sequence ID" value="AAL85877.1"/>
    <property type="molecule type" value="mRNA"/>
</dbReference>
<dbReference type="EMBL" id="AF475095">
    <property type="protein sequence ID" value="AAM10639.1"/>
    <property type="molecule type" value="mRNA"/>
</dbReference>
<dbReference type="EMBL" id="BC004944">
    <property type="protein sequence ID" value="AAH04944.1"/>
    <property type="molecule type" value="mRNA"/>
</dbReference>
<dbReference type="EMBL" id="BC013039">
    <property type="protein sequence ID" value="AAH13039.2"/>
    <property type="molecule type" value="mRNA"/>
</dbReference>
<dbReference type="EMBL" id="BC013027">
    <property type="protein sequence ID" value="AAH13027.2"/>
    <property type="molecule type" value="mRNA"/>
</dbReference>
<dbReference type="EMBL" id="BC069200">
    <property type="protein sequence ID" value="AAH69200.1"/>
    <property type="molecule type" value="mRNA"/>
</dbReference>
<dbReference type="EMBL" id="AJ295986">
    <property type="protein sequence ID" value="CAC82499.1"/>
    <property type="molecule type" value="mRNA"/>
</dbReference>
<dbReference type="EMBL" id="AF147080">
    <property type="status" value="NOT_ANNOTATED_CDS"/>
    <property type="molecule type" value="mRNA"/>
</dbReference>
<dbReference type="CCDS" id="CCDS12290.1"/>
<dbReference type="RefSeq" id="NP_443082.2">
    <property type="nucleotide sequence ID" value="NM_052850.3"/>
</dbReference>
<dbReference type="PDB" id="3J7Y">
    <property type="method" value="EM"/>
    <property type="resolution" value="3.40 A"/>
    <property type="chains" value="q=1-222"/>
</dbReference>
<dbReference type="PDB" id="3J9M">
    <property type="method" value="EM"/>
    <property type="resolution" value="3.50 A"/>
    <property type="chains" value="q=1-222"/>
</dbReference>
<dbReference type="PDB" id="5OOL">
    <property type="method" value="EM"/>
    <property type="resolution" value="3.06 A"/>
    <property type="chains" value="q=1-222"/>
</dbReference>
<dbReference type="PDB" id="5OOM">
    <property type="method" value="EM"/>
    <property type="resolution" value="3.03 A"/>
    <property type="chains" value="q=1-222"/>
</dbReference>
<dbReference type="PDB" id="6I9R">
    <property type="method" value="EM"/>
    <property type="resolution" value="3.90 A"/>
    <property type="chains" value="q=1-222"/>
</dbReference>
<dbReference type="PDB" id="6NU2">
    <property type="method" value="EM"/>
    <property type="resolution" value="3.90 A"/>
    <property type="chains" value="q=25-152"/>
</dbReference>
<dbReference type="PDB" id="6NU3">
    <property type="method" value="EM"/>
    <property type="resolution" value="4.40 A"/>
    <property type="chains" value="q=1-222"/>
</dbReference>
<dbReference type="PDB" id="6VLZ">
    <property type="method" value="EM"/>
    <property type="resolution" value="2.97 A"/>
    <property type="chains" value="q=1-222"/>
</dbReference>
<dbReference type="PDB" id="6VMI">
    <property type="method" value="EM"/>
    <property type="resolution" value="2.96 A"/>
    <property type="chains" value="q=1-222"/>
</dbReference>
<dbReference type="PDB" id="6ZM5">
    <property type="method" value="EM"/>
    <property type="resolution" value="2.89 A"/>
    <property type="chains" value="q=1-222"/>
</dbReference>
<dbReference type="PDB" id="6ZM6">
    <property type="method" value="EM"/>
    <property type="resolution" value="2.59 A"/>
    <property type="chains" value="q=1-222"/>
</dbReference>
<dbReference type="PDB" id="6ZS9">
    <property type="method" value="EM"/>
    <property type="resolution" value="4.00 A"/>
    <property type="chains" value="q=25-222"/>
</dbReference>
<dbReference type="PDB" id="6ZSA">
    <property type="method" value="EM"/>
    <property type="resolution" value="4.00 A"/>
    <property type="chains" value="q=25-222"/>
</dbReference>
<dbReference type="PDB" id="6ZSB">
    <property type="method" value="EM"/>
    <property type="resolution" value="4.50 A"/>
    <property type="chains" value="q=25-222"/>
</dbReference>
<dbReference type="PDB" id="6ZSC">
    <property type="method" value="EM"/>
    <property type="resolution" value="3.50 A"/>
    <property type="chains" value="q=25-222"/>
</dbReference>
<dbReference type="PDB" id="6ZSD">
    <property type="method" value="EM"/>
    <property type="resolution" value="3.70 A"/>
    <property type="chains" value="q=25-222"/>
</dbReference>
<dbReference type="PDB" id="6ZSE">
    <property type="method" value="EM"/>
    <property type="resolution" value="5.00 A"/>
    <property type="chains" value="q=25-222"/>
</dbReference>
<dbReference type="PDB" id="6ZSG">
    <property type="method" value="EM"/>
    <property type="resolution" value="4.00 A"/>
    <property type="chains" value="q=25-222"/>
</dbReference>
<dbReference type="PDB" id="7A5F">
    <property type="method" value="EM"/>
    <property type="resolution" value="4.40 A"/>
    <property type="chains" value="q3=1-222"/>
</dbReference>
<dbReference type="PDB" id="7A5G">
    <property type="method" value="EM"/>
    <property type="resolution" value="4.33 A"/>
    <property type="chains" value="q3=1-222"/>
</dbReference>
<dbReference type="PDB" id="7A5H">
    <property type="method" value="EM"/>
    <property type="resolution" value="3.30 A"/>
    <property type="chains" value="q=1-222"/>
</dbReference>
<dbReference type="PDB" id="7A5I">
    <property type="method" value="EM"/>
    <property type="resolution" value="3.70 A"/>
    <property type="chains" value="q3=1-222"/>
</dbReference>
<dbReference type="PDB" id="7A5J">
    <property type="method" value="EM"/>
    <property type="resolution" value="3.10 A"/>
    <property type="chains" value="q=1-222"/>
</dbReference>
<dbReference type="PDB" id="7A5K">
    <property type="method" value="EM"/>
    <property type="resolution" value="3.70 A"/>
    <property type="chains" value="q3=1-222"/>
</dbReference>
<dbReference type="PDB" id="7L08">
    <property type="method" value="EM"/>
    <property type="resolution" value="3.49 A"/>
    <property type="chains" value="q=1-222"/>
</dbReference>
<dbReference type="PDB" id="7L20">
    <property type="method" value="EM"/>
    <property type="resolution" value="3.15 A"/>
    <property type="chains" value="q=1-222"/>
</dbReference>
<dbReference type="PDB" id="7O9K">
    <property type="method" value="EM"/>
    <property type="resolution" value="3.10 A"/>
    <property type="chains" value="q=1-222"/>
</dbReference>
<dbReference type="PDB" id="7O9M">
    <property type="method" value="EM"/>
    <property type="resolution" value="2.50 A"/>
    <property type="chains" value="q=1-222"/>
</dbReference>
<dbReference type="PDB" id="7ODR">
    <property type="method" value="EM"/>
    <property type="resolution" value="2.90 A"/>
    <property type="chains" value="q=1-222"/>
</dbReference>
<dbReference type="PDB" id="7ODS">
    <property type="method" value="EM"/>
    <property type="resolution" value="3.10 A"/>
    <property type="chains" value="q=1-222"/>
</dbReference>
<dbReference type="PDB" id="7ODT">
    <property type="method" value="EM"/>
    <property type="resolution" value="3.10 A"/>
    <property type="chains" value="q=1-222"/>
</dbReference>
<dbReference type="PDB" id="7OF0">
    <property type="method" value="EM"/>
    <property type="resolution" value="2.20 A"/>
    <property type="chains" value="q=1-222"/>
</dbReference>
<dbReference type="PDB" id="7OF2">
    <property type="method" value="EM"/>
    <property type="resolution" value="2.70 A"/>
    <property type="chains" value="q=1-222"/>
</dbReference>
<dbReference type="PDB" id="7OF3">
    <property type="method" value="EM"/>
    <property type="resolution" value="2.70 A"/>
    <property type="chains" value="q=1-222"/>
</dbReference>
<dbReference type="PDB" id="7OF4">
    <property type="method" value="EM"/>
    <property type="resolution" value="2.70 A"/>
    <property type="chains" value="q=1-222"/>
</dbReference>
<dbReference type="PDB" id="7OF5">
    <property type="method" value="EM"/>
    <property type="resolution" value="2.90 A"/>
    <property type="chains" value="q=1-222"/>
</dbReference>
<dbReference type="PDB" id="7OF6">
    <property type="method" value="EM"/>
    <property type="resolution" value="2.60 A"/>
    <property type="chains" value="q=1-222"/>
</dbReference>
<dbReference type="PDB" id="7OF7">
    <property type="method" value="EM"/>
    <property type="resolution" value="2.50 A"/>
    <property type="chains" value="q=1-222"/>
</dbReference>
<dbReference type="PDB" id="7OG4">
    <property type="method" value="EM"/>
    <property type="resolution" value="3.80 A"/>
    <property type="chains" value="q=1-222"/>
</dbReference>
<dbReference type="PDB" id="7OI6">
    <property type="method" value="EM"/>
    <property type="resolution" value="5.70 A"/>
    <property type="chains" value="q=1-222"/>
</dbReference>
<dbReference type="PDB" id="7OI7">
    <property type="method" value="EM"/>
    <property type="resolution" value="3.50 A"/>
    <property type="chains" value="q=1-222"/>
</dbReference>
<dbReference type="PDB" id="7OI8">
    <property type="method" value="EM"/>
    <property type="resolution" value="3.50 A"/>
    <property type="chains" value="q=1-222"/>
</dbReference>
<dbReference type="PDB" id="7OI9">
    <property type="method" value="EM"/>
    <property type="resolution" value="3.30 A"/>
    <property type="chains" value="q=1-222"/>
</dbReference>
<dbReference type="PDB" id="7OIA">
    <property type="method" value="EM"/>
    <property type="resolution" value="3.20 A"/>
    <property type="chains" value="q=1-222"/>
</dbReference>
<dbReference type="PDB" id="7OIB">
    <property type="method" value="EM"/>
    <property type="resolution" value="3.30 A"/>
    <property type="chains" value="q=1-222"/>
</dbReference>
<dbReference type="PDB" id="7OIC">
    <property type="method" value="EM"/>
    <property type="resolution" value="3.10 A"/>
    <property type="chains" value="q=1-222"/>
</dbReference>
<dbReference type="PDB" id="7OID">
    <property type="method" value="EM"/>
    <property type="resolution" value="3.70 A"/>
    <property type="chains" value="q=1-222"/>
</dbReference>
<dbReference type="PDB" id="7OIE">
    <property type="method" value="EM"/>
    <property type="resolution" value="3.50 A"/>
    <property type="chains" value="q=1-222"/>
</dbReference>
<dbReference type="PDB" id="7PD3">
    <property type="method" value="EM"/>
    <property type="resolution" value="3.40 A"/>
    <property type="chains" value="q=1-222"/>
</dbReference>
<dbReference type="PDB" id="7PO4">
    <property type="method" value="EM"/>
    <property type="resolution" value="2.56 A"/>
    <property type="chains" value="q=1-222"/>
</dbReference>
<dbReference type="PDB" id="7QH6">
    <property type="method" value="EM"/>
    <property type="resolution" value="3.08 A"/>
    <property type="chains" value="q=1-222"/>
</dbReference>
<dbReference type="PDB" id="7QH7">
    <property type="method" value="EM"/>
    <property type="resolution" value="2.89 A"/>
    <property type="chains" value="q=25-125"/>
</dbReference>
<dbReference type="PDB" id="7QI4">
    <property type="method" value="EM"/>
    <property type="resolution" value="2.21 A"/>
    <property type="chains" value="q=1-222"/>
</dbReference>
<dbReference type="PDB" id="7QI5">
    <property type="method" value="EM"/>
    <property type="resolution" value="2.63 A"/>
    <property type="chains" value="q=1-222"/>
</dbReference>
<dbReference type="PDB" id="7QI6">
    <property type="method" value="EM"/>
    <property type="resolution" value="2.98 A"/>
    <property type="chains" value="q=1-222"/>
</dbReference>
<dbReference type="PDB" id="8ANY">
    <property type="method" value="EM"/>
    <property type="resolution" value="2.85 A"/>
    <property type="chains" value="q=1-222"/>
</dbReference>
<dbReference type="PDB" id="8K2A">
    <property type="method" value="EM"/>
    <property type="resolution" value="2.90 A"/>
    <property type="chains" value="L8=1-222"/>
</dbReference>
<dbReference type="PDB" id="8K2B">
    <property type="method" value="EM"/>
    <property type="resolution" value="3.40 A"/>
    <property type="chains" value="L8=1-222"/>
</dbReference>
<dbReference type="PDB" id="8OIR">
    <property type="method" value="EM"/>
    <property type="resolution" value="3.10 A"/>
    <property type="chains" value="Bg=1-222"/>
</dbReference>
<dbReference type="PDB" id="8OIT">
    <property type="method" value="EM"/>
    <property type="resolution" value="2.90 A"/>
    <property type="chains" value="Bg=1-222"/>
</dbReference>
<dbReference type="PDB" id="8PK0">
    <property type="method" value="EM"/>
    <property type="resolution" value="3.03 A"/>
    <property type="chains" value="q=1-222"/>
</dbReference>
<dbReference type="PDB" id="8QSJ">
    <property type="method" value="EM"/>
    <property type="resolution" value="3.00 A"/>
    <property type="chains" value="q=1-222"/>
</dbReference>
<dbReference type="PDB" id="8QU5">
    <property type="method" value="EM"/>
    <property type="resolution" value="2.42 A"/>
    <property type="chains" value="q=1-222"/>
</dbReference>
<dbReference type="PDB" id="8RRI">
    <property type="method" value="EM"/>
    <property type="resolution" value="2.40 A"/>
    <property type="chains" value="q=1-222"/>
</dbReference>
<dbReference type="PDB" id="8XT0">
    <property type="method" value="EM"/>
    <property type="resolution" value="3.20 A"/>
    <property type="chains" value="L8=1-222"/>
</dbReference>
<dbReference type="PDB" id="8XT1">
    <property type="method" value="EM"/>
    <property type="resolution" value="3.10 A"/>
    <property type="chains" value="L8=1-222"/>
</dbReference>
<dbReference type="PDB" id="8XT2">
    <property type="method" value="EM"/>
    <property type="resolution" value="3.30 A"/>
    <property type="chains" value="L8=1-222"/>
</dbReference>
<dbReference type="PDB" id="8XT3">
    <property type="method" value="EM"/>
    <property type="resolution" value="3.10 A"/>
    <property type="chains" value="L8=1-222"/>
</dbReference>
<dbReference type="PDBsum" id="3J7Y"/>
<dbReference type="PDBsum" id="3J9M"/>
<dbReference type="PDBsum" id="5OOL"/>
<dbReference type="PDBsum" id="5OOM"/>
<dbReference type="PDBsum" id="6I9R"/>
<dbReference type="PDBsum" id="6NU2"/>
<dbReference type="PDBsum" id="6NU3"/>
<dbReference type="PDBsum" id="6VLZ"/>
<dbReference type="PDBsum" id="6VMI"/>
<dbReference type="PDBsum" id="6ZM5"/>
<dbReference type="PDBsum" id="6ZM6"/>
<dbReference type="PDBsum" id="6ZS9"/>
<dbReference type="PDBsum" id="6ZSA"/>
<dbReference type="PDBsum" id="6ZSB"/>
<dbReference type="PDBsum" id="6ZSC"/>
<dbReference type="PDBsum" id="6ZSD"/>
<dbReference type="PDBsum" id="6ZSE"/>
<dbReference type="PDBsum" id="6ZSG"/>
<dbReference type="PDBsum" id="7A5F"/>
<dbReference type="PDBsum" id="7A5G"/>
<dbReference type="PDBsum" id="7A5H"/>
<dbReference type="PDBsum" id="7A5I"/>
<dbReference type="PDBsum" id="7A5J"/>
<dbReference type="PDBsum" id="7A5K"/>
<dbReference type="PDBsum" id="7L08"/>
<dbReference type="PDBsum" id="7L20"/>
<dbReference type="PDBsum" id="7O9K"/>
<dbReference type="PDBsum" id="7O9M"/>
<dbReference type="PDBsum" id="7ODR"/>
<dbReference type="PDBsum" id="7ODS"/>
<dbReference type="PDBsum" id="7ODT"/>
<dbReference type="PDBsum" id="7OF0"/>
<dbReference type="PDBsum" id="7OF2"/>
<dbReference type="PDBsum" id="7OF3"/>
<dbReference type="PDBsum" id="7OF4"/>
<dbReference type="PDBsum" id="7OF5"/>
<dbReference type="PDBsum" id="7OF6"/>
<dbReference type="PDBsum" id="7OF7"/>
<dbReference type="PDBsum" id="7OG4"/>
<dbReference type="PDBsum" id="7OI6"/>
<dbReference type="PDBsum" id="7OI7"/>
<dbReference type="PDBsum" id="7OI8"/>
<dbReference type="PDBsum" id="7OI9"/>
<dbReference type="PDBsum" id="7OIA"/>
<dbReference type="PDBsum" id="7OIB"/>
<dbReference type="PDBsum" id="7OIC"/>
<dbReference type="PDBsum" id="7OID"/>
<dbReference type="PDBsum" id="7OIE"/>
<dbReference type="PDBsum" id="7PD3"/>
<dbReference type="PDBsum" id="7PO4"/>
<dbReference type="PDBsum" id="7QH6"/>
<dbReference type="PDBsum" id="7QH7"/>
<dbReference type="PDBsum" id="7QI4"/>
<dbReference type="PDBsum" id="7QI5"/>
<dbReference type="PDBsum" id="7QI6"/>
<dbReference type="PDBsum" id="8ANY"/>
<dbReference type="PDBsum" id="8K2A"/>
<dbReference type="PDBsum" id="8K2B"/>
<dbReference type="PDBsum" id="8OIR"/>
<dbReference type="PDBsum" id="8OIT"/>
<dbReference type="PDBsum" id="8PK0"/>
<dbReference type="PDBsum" id="8QSJ"/>
<dbReference type="PDBsum" id="8QU5"/>
<dbReference type="PDBsum" id="8RRI"/>
<dbReference type="PDBsum" id="8XT0"/>
<dbReference type="PDBsum" id="8XT1"/>
<dbReference type="PDBsum" id="8XT2"/>
<dbReference type="PDBsum" id="8XT3"/>
<dbReference type="EMDB" id="EMD-0514"/>
<dbReference type="EMDB" id="EMD-0515"/>
<dbReference type="EMDB" id="EMD-11278"/>
<dbReference type="EMDB" id="EMD-11279"/>
<dbReference type="EMDB" id="EMD-11390"/>
<dbReference type="EMDB" id="EMD-11391"/>
<dbReference type="EMDB" id="EMD-11392"/>
<dbReference type="EMDB" id="EMD-11393"/>
<dbReference type="EMDB" id="EMD-11394"/>
<dbReference type="EMDB" id="EMD-11395"/>
<dbReference type="EMDB" id="EMD-11397"/>
<dbReference type="EMDB" id="EMD-11641"/>
<dbReference type="EMDB" id="EMD-11642"/>
<dbReference type="EMDB" id="EMD-11643"/>
<dbReference type="EMDB" id="EMD-11644"/>
<dbReference type="EMDB" id="EMD-11645"/>
<dbReference type="EMDB" id="EMD-11646"/>
<dbReference type="EMDB" id="EMD-12763"/>
<dbReference type="EMDB" id="EMD-12764"/>
<dbReference type="EMDB" id="EMD-12845"/>
<dbReference type="EMDB" id="EMD-12846"/>
<dbReference type="EMDB" id="EMD-12847"/>
<dbReference type="EMDB" id="EMD-12865"/>
<dbReference type="EMDB" id="EMD-12867"/>
<dbReference type="EMDB" id="EMD-12868"/>
<dbReference type="EMDB" id="EMD-12869"/>
<dbReference type="EMDB" id="EMD-12870"/>
<dbReference type="EMDB" id="EMD-12871"/>
<dbReference type="EMDB" id="EMD-12872"/>
<dbReference type="EMDB" id="EMD-12877"/>
<dbReference type="EMDB" id="EMD-12919"/>
<dbReference type="EMDB" id="EMD-12920"/>
<dbReference type="EMDB" id="EMD-12921"/>
<dbReference type="EMDB" id="EMD-12922"/>
<dbReference type="EMDB" id="EMD-12923"/>
<dbReference type="EMDB" id="EMD-12924"/>
<dbReference type="EMDB" id="EMD-12925"/>
<dbReference type="EMDB" id="EMD-12926"/>
<dbReference type="EMDB" id="EMD-12927"/>
<dbReference type="EMDB" id="EMD-13329"/>
<dbReference type="EMDB" id="EMD-13562"/>
<dbReference type="EMDB" id="EMD-13965"/>
<dbReference type="EMDB" id="EMD-13967"/>
<dbReference type="EMDB" id="EMD-13980"/>
<dbReference type="EMDB" id="EMD-13981"/>
<dbReference type="EMDB" id="EMD-13982"/>
<dbReference type="EMDB" id="EMD-15544"/>
<dbReference type="EMDB" id="EMD-16897"/>
<dbReference type="EMDB" id="EMD-16899"/>
<dbReference type="EMDB" id="EMD-17719"/>
<dbReference type="EMDB" id="EMD-19460"/>
<dbReference type="EMDB" id="EMD-21233"/>
<dbReference type="EMDB" id="EMD-21242"/>
<dbReference type="EMDB" id="EMD-23096"/>
<dbReference type="EMDB" id="EMD-23121"/>
<dbReference type="EMDB" id="EMD-36836"/>
<dbReference type="EMDB" id="EMD-36837"/>
<dbReference type="EMDB" id="EMD-3842"/>
<dbReference type="EMDB" id="EMD-3843"/>
<dbReference type="EMDB" id="EMD-38632"/>
<dbReference type="EMDB" id="EMD-38633"/>
<dbReference type="EMDB" id="EMD-38634"/>
<dbReference type="EMDB" id="EMD-38635"/>
<dbReference type="EMDB" id="EMD-4434"/>
<dbReference type="SMR" id="Q8TAE8"/>
<dbReference type="BioGRID" id="124721">
    <property type="interactions" value="293"/>
</dbReference>
<dbReference type="ComplexPortal" id="CPX-5226">
    <property type="entry name" value="39S mitochondrial large ribosomal subunit"/>
</dbReference>
<dbReference type="FunCoup" id="Q8TAE8">
    <property type="interactions" value="1671"/>
</dbReference>
<dbReference type="IntAct" id="Q8TAE8">
    <property type="interactions" value="208"/>
</dbReference>
<dbReference type="MINT" id="Q8TAE8"/>
<dbReference type="STRING" id="9606.ENSP00000323065"/>
<dbReference type="GlyGen" id="Q8TAE8">
    <property type="glycosylation" value="1 site, 1 O-linked glycan (1 site)"/>
</dbReference>
<dbReference type="iPTMnet" id="Q8TAE8"/>
<dbReference type="PhosphoSitePlus" id="Q8TAE8"/>
<dbReference type="SwissPalm" id="Q8TAE8"/>
<dbReference type="BioMuta" id="GADD45GIP1"/>
<dbReference type="DMDM" id="74730346"/>
<dbReference type="jPOST" id="Q8TAE8"/>
<dbReference type="MassIVE" id="Q8TAE8"/>
<dbReference type="PaxDb" id="9606-ENSP00000323065"/>
<dbReference type="PeptideAtlas" id="Q8TAE8"/>
<dbReference type="ProteomicsDB" id="73869"/>
<dbReference type="Pumba" id="Q8TAE8"/>
<dbReference type="Antibodypedia" id="26334">
    <property type="antibodies" value="161 antibodies from 31 providers"/>
</dbReference>
<dbReference type="DNASU" id="90480"/>
<dbReference type="Ensembl" id="ENST00000316939.3">
    <property type="protein sequence ID" value="ENSP00000323065.1"/>
    <property type="gene ID" value="ENSG00000179271.3"/>
</dbReference>
<dbReference type="GeneID" id="90480"/>
<dbReference type="KEGG" id="hsa:90480"/>
<dbReference type="MANE-Select" id="ENST00000316939.3">
    <property type="protein sequence ID" value="ENSP00000323065.1"/>
    <property type="RefSeq nucleotide sequence ID" value="NM_052850.4"/>
    <property type="RefSeq protein sequence ID" value="NP_443082.2"/>
</dbReference>
<dbReference type="UCSC" id="uc002mwb.5">
    <property type="organism name" value="human"/>
</dbReference>
<dbReference type="AGR" id="HGNC:29996"/>
<dbReference type="CTD" id="90480"/>
<dbReference type="DisGeNET" id="90480"/>
<dbReference type="GeneCards" id="GADD45GIP1"/>
<dbReference type="HGNC" id="HGNC:29996">
    <property type="gene designation" value="GADD45GIP1"/>
</dbReference>
<dbReference type="HPA" id="ENSG00000179271">
    <property type="expression patterns" value="Low tissue specificity"/>
</dbReference>
<dbReference type="MIM" id="605162">
    <property type="type" value="gene"/>
</dbReference>
<dbReference type="neXtProt" id="NX_Q8TAE8"/>
<dbReference type="OpenTargets" id="ENSG00000179271"/>
<dbReference type="PharmGKB" id="PA134954784"/>
<dbReference type="VEuPathDB" id="HostDB:ENSG00000179271"/>
<dbReference type="eggNOG" id="KOG4848">
    <property type="taxonomic scope" value="Eukaryota"/>
</dbReference>
<dbReference type="GeneTree" id="ENSGT00390000013719"/>
<dbReference type="HOGENOM" id="CLU_102022_0_0_1"/>
<dbReference type="InParanoid" id="Q8TAE8"/>
<dbReference type="OMA" id="DHRDPKF"/>
<dbReference type="OrthoDB" id="6247992at2759"/>
<dbReference type="PAN-GO" id="Q8TAE8">
    <property type="GO annotations" value="0 GO annotations based on evolutionary models"/>
</dbReference>
<dbReference type="PhylomeDB" id="Q8TAE8"/>
<dbReference type="TreeFam" id="TF323794"/>
<dbReference type="PathwayCommons" id="Q8TAE8"/>
<dbReference type="Reactome" id="R-HSA-5368286">
    <property type="pathway name" value="Mitochondrial translation initiation"/>
</dbReference>
<dbReference type="Reactome" id="R-HSA-5389840">
    <property type="pathway name" value="Mitochondrial translation elongation"/>
</dbReference>
<dbReference type="Reactome" id="R-HSA-5419276">
    <property type="pathway name" value="Mitochondrial translation termination"/>
</dbReference>
<dbReference type="SignaLink" id="Q8TAE8"/>
<dbReference type="SIGNOR" id="Q8TAE8"/>
<dbReference type="BioGRID-ORCS" id="90480">
    <property type="hits" value="220 hits in 1157 CRISPR screens"/>
</dbReference>
<dbReference type="ChiTaRS" id="GADD45GIP1">
    <property type="organism name" value="human"/>
</dbReference>
<dbReference type="EvolutionaryTrace" id="Q8TAE8"/>
<dbReference type="GeneWiki" id="GADD45GIP1"/>
<dbReference type="GenomeRNAi" id="90480"/>
<dbReference type="Pharos" id="Q8TAE8">
    <property type="development level" value="Tbio"/>
</dbReference>
<dbReference type="PRO" id="PR:Q8TAE8"/>
<dbReference type="Proteomes" id="UP000005640">
    <property type="component" value="Chromosome 19"/>
</dbReference>
<dbReference type="RNAct" id="Q8TAE8">
    <property type="molecule type" value="protein"/>
</dbReference>
<dbReference type="Bgee" id="ENSG00000179271">
    <property type="expression patterns" value="Expressed in apex of heart and 171 other cell types or tissues"/>
</dbReference>
<dbReference type="GO" id="GO:0005743">
    <property type="term" value="C:mitochondrial inner membrane"/>
    <property type="evidence" value="ECO:0000303"/>
    <property type="project" value="ComplexPortal"/>
</dbReference>
<dbReference type="GO" id="GO:0005762">
    <property type="term" value="C:mitochondrial large ribosomal subunit"/>
    <property type="evidence" value="ECO:0000303"/>
    <property type="project" value="ComplexPortal"/>
</dbReference>
<dbReference type="GO" id="GO:0005759">
    <property type="term" value="C:mitochondrial matrix"/>
    <property type="evidence" value="ECO:0000304"/>
    <property type="project" value="Reactome"/>
</dbReference>
<dbReference type="GO" id="GO:0005739">
    <property type="term" value="C:mitochondrion"/>
    <property type="evidence" value="ECO:0000314"/>
    <property type="project" value="HPA"/>
</dbReference>
<dbReference type="GO" id="GO:0005654">
    <property type="term" value="C:nucleoplasm"/>
    <property type="evidence" value="ECO:0000314"/>
    <property type="project" value="HPA"/>
</dbReference>
<dbReference type="GO" id="GO:0032543">
    <property type="term" value="P:mitochondrial translation"/>
    <property type="evidence" value="ECO:0000303"/>
    <property type="project" value="ComplexPortal"/>
</dbReference>
<dbReference type="Gene3D" id="6.10.280.120">
    <property type="entry name" value="Growth arrest and DNA-damage-inducible proteins-interacting protein 1"/>
    <property type="match status" value="1"/>
</dbReference>
<dbReference type="InterPro" id="IPR018472">
    <property type="entry name" value="Ribosomal_mL64"/>
</dbReference>
<dbReference type="InterPro" id="IPR043035">
    <property type="entry name" value="Ribosomal_mL64_sf"/>
</dbReference>
<dbReference type="PANTHER" id="PTHR31761">
    <property type="entry name" value="GROWTH ARREST AND DNA DAMAGE-INDUCIBLE PROTEINS-INTERACTING PROTEIN 1 GADD45GIP1"/>
    <property type="match status" value="1"/>
</dbReference>
<dbReference type="PANTHER" id="PTHR31761:SF1">
    <property type="entry name" value="LARGE RIBOSOMAL SUBUNIT PROTEIN ML64"/>
    <property type="match status" value="1"/>
</dbReference>
<dbReference type="Pfam" id="PF10147">
    <property type="entry name" value="CR6_interact"/>
    <property type="match status" value="1"/>
</dbReference>
<gene>
    <name type="primary">GADD45GIP1</name>
    <name type="synonym">MRPL59</name>
    <name type="synonym">PLINP1</name>
    <name type="synonym">PRG6</name>
</gene>
<name>G45IP_HUMAN</name>
<organism>
    <name type="scientific">Homo sapiens</name>
    <name type="common">Human</name>
    <dbReference type="NCBI Taxonomy" id="9606"/>
    <lineage>
        <taxon>Eukaryota</taxon>
        <taxon>Metazoa</taxon>
        <taxon>Chordata</taxon>
        <taxon>Craniata</taxon>
        <taxon>Vertebrata</taxon>
        <taxon>Euteleostomi</taxon>
        <taxon>Mammalia</taxon>
        <taxon>Eutheria</taxon>
        <taxon>Euarchontoglires</taxon>
        <taxon>Primates</taxon>
        <taxon>Haplorrhini</taxon>
        <taxon>Catarrhini</taxon>
        <taxon>Hominidae</taxon>
        <taxon>Homo</taxon>
    </lineage>
</organism>
<accession>Q8TAE8</accession>
<accession>Q8IVM3</accession>
<accession>Q8TE51</accession>
<accession>Q969P9</accession>
<accession>Q9BSM6</accession>
<keyword id="KW-0002">3D-structure</keyword>
<keyword id="KW-0131">Cell cycle</keyword>
<keyword id="KW-0175">Coiled coil</keyword>
<keyword id="KW-0945">Host-virus interaction</keyword>
<keyword id="KW-0496">Mitochondrion</keyword>
<keyword id="KW-0539">Nucleus</keyword>
<keyword id="KW-1267">Proteomics identification</keyword>
<keyword id="KW-1185">Reference proteome</keyword>
<keyword id="KW-0687">Ribonucleoprotein</keyword>
<keyword id="KW-0689">Ribosomal protein</keyword>
<feature type="chain" id="PRO_0000228620" description="Large ribosomal subunit protein mL64">
    <location>
        <begin position="1"/>
        <end position="222"/>
    </location>
</feature>
<feature type="region of interest" description="Disordered" evidence="2">
    <location>
        <begin position="19"/>
        <end position="46"/>
    </location>
</feature>
<feature type="region of interest" description="Disordered" evidence="2">
    <location>
        <begin position="188"/>
        <end position="222"/>
    </location>
</feature>
<feature type="coiled-coil region" evidence="1">
    <location>
        <begin position="99"/>
        <end position="212"/>
    </location>
</feature>
<feature type="short sequence motif" description="Nuclear localization signal" evidence="1">
    <location>
        <begin position="184"/>
        <end position="200"/>
    </location>
</feature>
<feature type="compositionally biased region" description="Basic residues" evidence="2">
    <location>
        <begin position="25"/>
        <end position="36"/>
    </location>
</feature>
<feature type="compositionally biased region" description="Low complexity" evidence="2">
    <location>
        <begin position="203"/>
        <end position="212"/>
    </location>
</feature>
<feature type="sequence conflict" description="In Ref. 1; CAD22344." evidence="14" ref="1">
    <original>QARS</original>
    <variation>KALN</variation>
    <location>
        <begin position="7"/>
        <end position="10"/>
    </location>
</feature>
<feature type="strand" evidence="23">
    <location>
        <begin position="42"/>
        <end position="44"/>
    </location>
</feature>
<feature type="strand" evidence="24">
    <location>
        <begin position="45"/>
        <end position="47"/>
    </location>
</feature>
<feature type="helix" evidence="21">
    <location>
        <begin position="49"/>
        <end position="51"/>
    </location>
</feature>
<feature type="helix" evidence="21">
    <location>
        <begin position="54"/>
        <end position="64"/>
    </location>
</feature>
<feature type="helix" evidence="21">
    <location>
        <begin position="65"/>
        <end position="68"/>
    </location>
</feature>
<feature type="helix" evidence="21">
    <location>
        <begin position="72"/>
        <end position="75"/>
    </location>
</feature>
<feature type="helix" evidence="21">
    <location>
        <begin position="79"/>
        <end position="92"/>
    </location>
</feature>
<feature type="helix" evidence="21">
    <location>
        <begin position="96"/>
        <end position="151"/>
    </location>
</feature>
<feature type="turn" evidence="22">
    <location>
        <begin position="166"/>
        <end position="169"/>
    </location>
</feature>
<feature type="helix" evidence="22">
    <location>
        <begin position="170"/>
        <end position="187"/>
    </location>
</feature>
<comment type="function">
    <text>Acts as a negative regulator of G1 to S cell cycle phase progression by inhibiting cyclin-dependent kinases. Inhibitory effects are additive with GADD45 proteins but also occur in the absence of GADD45 proteins. Acts as a repressor of the orphan nuclear receptor NR4A1 by inhibiting AB domain-mediated transcriptional activity. May be involved in the hormone-mediated regulation of NR4A1 transcriptional activity. May play a role in mitochondrial protein synthesis.</text>
</comment>
<comment type="subunit">
    <text evidence="5 6 7 8 9 10 11 12">Component of the mitochondrial large ribosomal subunit (mt-LSU) (PubMed:25278503, PubMed:25838379, PubMed:28892042, PubMed:35177605). Mature mammalian 55S mitochondrial ribosomes consist of a small (28S) and a large (39S) subunit. The 28S small subunit contains a 12S ribosomal RNA (12S mt-rRNA) and 30 different proteins. The 39S large subunit contains a 16S rRNA (16S mt-rRNA), a copy of mitochondrial valine transfer RNA (mt-tRNA(Val)), which plays an integral structural role, and 52 different proteins (PubMed:23908630, PubMed:25278503, PubMed:25838379). Interacts with GADD45A, GADD45B and GADD45G (PubMed:12716909). Interacts with NR4A1 via the NR4A1 AB domain (PubMed:15459248). Interacts with ATAD3A and ATAD3B (PubMed:22453275).</text>
</comment>
<comment type="subunit">
    <text evidence="4">(Microbial infection) Interacts with the human papilloma virus type 16 (HPV 16) minor capsid protein L2.</text>
</comment>
<comment type="interaction">
    <interactant intactId="EBI-372506">
        <id>Q8TAE8</id>
    </interactant>
    <interactant intactId="EBI-359567">
        <id>O15084</id>
        <label>ANKRD28</label>
    </interactant>
    <organismsDiffer>false</organismsDiffer>
    <experiments>3</experiments>
</comment>
<comment type="interaction">
    <interactant intactId="EBI-372506">
        <id>Q8TAE8</id>
    </interactant>
    <interactant intactId="EBI-953896">
        <id>Q9NP55</id>
        <label>BPIFA1</label>
    </interactant>
    <organismsDiffer>false</organismsDiffer>
    <experiments>3</experiments>
</comment>
<comment type="interaction">
    <interactant intactId="EBI-372506">
        <id>Q8TAE8</id>
    </interactant>
    <interactant intactId="EBI-10179719">
        <id>A2RRN7</id>
        <label>CADPS</label>
    </interactant>
    <organismsDiffer>false</organismsDiffer>
    <experiments>3</experiments>
</comment>
<comment type="interaction">
    <interactant intactId="EBI-372506">
        <id>Q8TAE8</id>
    </interactant>
    <interactant intactId="EBI-3866279">
        <id>Q9BWT7</id>
        <label>CARD10</label>
    </interactant>
    <organismsDiffer>false</organismsDiffer>
    <experiments>3</experiments>
</comment>
<comment type="interaction">
    <interactant intactId="EBI-372506">
        <id>Q8TAE8</id>
    </interactant>
    <interactant intactId="EBI-11524851">
        <id>Q8NA61-2</id>
        <label>CBY2</label>
    </interactant>
    <organismsDiffer>false</organismsDiffer>
    <experiments>3</experiments>
</comment>
<comment type="interaction">
    <interactant intactId="EBI-372506">
        <id>Q8TAE8</id>
    </interactant>
    <interactant intactId="EBI-395261">
        <id>P24863</id>
        <label>CCNC</label>
    </interactant>
    <organismsDiffer>false</organismsDiffer>
    <experiments>3</experiments>
</comment>
<comment type="interaction">
    <interactant intactId="EBI-372506">
        <id>Q8TAE8</id>
    </interactant>
    <interactant intactId="EBI-739624">
        <id>Q8NHQ1</id>
        <label>CEP70</label>
    </interactant>
    <organismsDiffer>false</organismsDiffer>
    <experiments>3</experiments>
</comment>
<comment type="interaction">
    <interactant intactId="EBI-372506">
        <id>Q8TAE8</id>
    </interactant>
    <interactant intactId="EBI-739789">
        <id>Q92997</id>
        <label>DVL3</label>
    </interactant>
    <organismsDiffer>false</organismsDiffer>
    <experiments>3</experiments>
</comment>
<comment type="interaction">
    <interactant intactId="EBI-372506">
        <id>Q8TAE8</id>
    </interactant>
    <interactant intactId="EBI-769261">
        <id>Q96JC9</id>
        <label>EAF1</label>
    </interactant>
    <organismsDiffer>false</organismsDiffer>
    <experiments>3</experiments>
</comment>
<comment type="interaction">
    <interactant intactId="EBI-372506">
        <id>Q8TAE8</id>
    </interactant>
    <interactant intactId="EBI-744099">
        <id>Q9H0I2</id>
        <label>ENKD1</label>
    </interactant>
    <organismsDiffer>false</organismsDiffer>
    <experiments>3</experiments>
</comment>
<comment type="interaction">
    <interactant intactId="EBI-372506">
        <id>Q8TAE8</id>
    </interactant>
    <interactant intactId="EBI-448167">
        <id>P24522</id>
        <label>GADD45A</label>
    </interactant>
    <organismsDiffer>false</organismsDiffer>
    <experiments>3</experiments>
</comment>
<comment type="interaction">
    <interactant intactId="EBI-372506">
        <id>Q8TAE8</id>
    </interactant>
    <interactant intactId="EBI-448202">
        <id>O95257</id>
        <label>GADD45G</label>
    </interactant>
    <organismsDiffer>false</organismsDiffer>
    <experiments>4</experiments>
</comment>
<comment type="interaction">
    <interactant intactId="EBI-372506">
        <id>Q8TAE8</id>
    </interactant>
    <interactant intactId="EBI-1052570">
        <id>O95995</id>
        <label>GAS8</label>
    </interactant>
    <organismsDiffer>false</organismsDiffer>
    <experiments>3</experiments>
</comment>
<comment type="interaction">
    <interactant intactId="EBI-372506">
        <id>Q8TAE8</id>
    </interactant>
    <interactant intactId="EBI-744104">
        <id>P55040</id>
        <label>GEM</label>
    </interactant>
    <organismsDiffer>false</organismsDiffer>
    <experiments>3</experiments>
</comment>
<comment type="interaction">
    <interactant intactId="EBI-372506">
        <id>Q8TAE8</id>
    </interactant>
    <interactant intactId="EBI-618309">
        <id>Q08379</id>
        <label>GOLGA2</label>
    </interactant>
    <organismsDiffer>false</organismsDiffer>
    <experiments>3</experiments>
</comment>
<comment type="interaction">
    <interactant intactId="EBI-372506">
        <id>Q8TAE8</id>
    </interactant>
    <interactant intactId="EBI-11163335">
        <id>Q9NYA3</id>
        <label>GOLGA6A</label>
    </interactant>
    <organismsDiffer>false</organismsDiffer>
    <experiments>3</experiments>
</comment>
<comment type="interaction">
    <interactant intactId="EBI-372506">
        <id>Q8TAE8</id>
    </interactant>
    <interactant intactId="EBI-5916454">
        <id>A6NEM1</id>
        <label>GOLGA6L9</label>
    </interactant>
    <organismsDiffer>false</organismsDiffer>
    <experiments>3</experiments>
</comment>
<comment type="interaction">
    <interactant intactId="EBI-372506">
        <id>Q8TAE8</id>
    </interactant>
    <interactant intactId="EBI-473189">
        <id>Q96D09</id>
        <label>GPRASP2</label>
    </interactant>
    <organismsDiffer>false</organismsDiffer>
    <experiments>3</experiments>
</comment>
<comment type="interaction">
    <interactant intactId="EBI-372506">
        <id>Q8TAE8</id>
    </interactant>
    <interactant intactId="EBI-740641">
        <id>Q9NP66</id>
        <label>HMG20A</label>
    </interactant>
    <organismsDiffer>false</organismsDiffer>
    <experiments>3</experiments>
</comment>
<comment type="interaction">
    <interactant intactId="EBI-372506">
        <id>Q8TAE8</id>
    </interactant>
    <interactant intactId="EBI-2556193">
        <id>Q63ZY3</id>
        <label>KANK2</label>
    </interactant>
    <organismsDiffer>false</organismsDiffer>
    <experiments>3</experiments>
</comment>
<comment type="interaction">
    <interactant intactId="EBI-372506">
        <id>Q8TAE8</id>
    </interactant>
    <interactant intactId="EBI-14069005">
        <id>Q9BVG8-5</id>
        <label>KIFC3</label>
    </interactant>
    <organismsDiffer>false</organismsDiffer>
    <experiments>3</experiments>
</comment>
<comment type="interaction">
    <interactant intactId="EBI-372506">
        <id>Q8TAE8</id>
    </interactant>
    <interactant intactId="EBI-3044087">
        <id>Q7Z3Y8</id>
        <label>KRT27</label>
    </interactant>
    <organismsDiffer>false</organismsDiffer>
    <experiments>3</experiments>
</comment>
<comment type="interaction">
    <interactant intactId="EBI-372506">
        <id>Q8TAE8</id>
    </interactant>
    <interactant intactId="EBI-948001">
        <id>Q15323</id>
        <label>KRT31</label>
    </interactant>
    <organismsDiffer>false</organismsDiffer>
    <experiments>3</experiments>
</comment>
<comment type="interaction">
    <interactant intactId="EBI-372506">
        <id>Q8TAE8</id>
    </interactant>
    <interactant intactId="EBI-1047093">
        <id>O76011</id>
        <label>KRT34</label>
    </interactant>
    <organismsDiffer>false</organismsDiffer>
    <experiments>3</experiments>
</comment>
<comment type="interaction">
    <interactant intactId="EBI-372506">
        <id>Q8TAE8</id>
    </interactant>
    <interactant intactId="EBI-10171697">
        <id>Q6A162</id>
        <label>KRT40</label>
    </interactant>
    <organismsDiffer>false</organismsDiffer>
    <experiments>3</experiments>
</comment>
<comment type="interaction">
    <interactant intactId="EBI-372506">
        <id>Q8TAE8</id>
    </interactant>
    <interactant intactId="EBI-740738">
        <id>O95751</id>
        <label>LDOC1</label>
    </interactant>
    <organismsDiffer>false</organismsDiffer>
    <experiments>3</experiments>
</comment>
<comment type="interaction">
    <interactant intactId="EBI-372506">
        <id>Q8TAE8</id>
    </interactant>
    <interactant intactId="EBI-12003882">
        <id>Q5JTD7</id>
        <label>LRRC73</label>
    </interactant>
    <organismsDiffer>false</organismsDiffer>
    <experiments>3</experiments>
</comment>
<comment type="interaction">
    <interactant intactId="EBI-372506">
        <id>Q8TAE8</id>
    </interactant>
    <interactant intactId="EBI-741037">
        <id>Q9BRK4</id>
        <label>LZTS2</label>
    </interactant>
    <organismsDiffer>false</organismsDiffer>
    <experiments>3</experiments>
</comment>
<comment type="interaction">
    <interactant intactId="EBI-372506">
        <id>Q8TAE8</id>
    </interactant>
    <interactant intactId="EBI-739552">
        <id>P43364</id>
        <label>MAGEA11</label>
    </interactant>
    <organismsDiffer>false</organismsDiffer>
    <experiments>3</experiments>
</comment>
<comment type="interaction">
    <interactant intactId="EBI-372506">
        <id>Q8TAE8</id>
    </interactant>
    <interactant intactId="EBI-1045155">
        <id>P43360</id>
        <label>MAGEA6</label>
    </interactant>
    <organismsDiffer>false</organismsDiffer>
    <experiments>3</experiments>
</comment>
<comment type="interaction">
    <interactant intactId="EBI-372506">
        <id>Q8TAE8</id>
    </interactant>
    <interactant intactId="EBI-11978579">
        <id>O95983-2</id>
        <label>MBD3</label>
    </interactant>
    <organismsDiffer>false</organismsDiffer>
    <experiments>3</experiments>
</comment>
<comment type="interaction">
    <interactant intactId="EBI-372506">
        <id>Q8TAE8</id>
    </interactant>
    <interactant intactId="EBI-2548751">
        <id>Q8TD10</id>
        <label>MIPOL1</label>
    </interactant>
    <organismsDiffer>false</organismsDiffer>
    <experiments>3</experiments>
</comment>
<comment type="interaction">
    <interactant intactId="EBI-372506">
        <id>Q8TAE8</id>
    </interactant>
    <interactant intactId="EBI-2340269">
        <id>Q13064</id>
        <label>MKRN3</label>
    </interactant>
    <organismsDiffer>false</organismsDiffer>
    <experiments>3</experiments>
</comment>
<comment type="interaction">
    <interactant intactId="EBI-372506">
        <id>Q8TAE8</id>
    </interactant>
    <interactant intactId="EBI-720441">
        <id>Q96DV4</id>
        <label>MRPL38</label>
    </interactant>
    <organismsDiffer>false</organismsDiffer>
    <experiments>5</experiments>
</comment>
<comment type="interaction">
    <interactant intactId="EBI-372506">
        <id>Q8TAE8</id>
    </interactant>
    <interactant intactId="EBI-11522433">
        <id>Q5JR59-3</id>
        <label>MTUS2</label>
    </interactant>
    <organismsDiffer>false</organismsDiffer>
    <experiments>3</experiments>
</comment>
<comment type="interaction">
    <interactant intactId="EBI-372506">
        <id>Q8TAE8</id>
    </interactant>
    <interactant intactId="EBI-709754">
        <id>Q9HB07</id>
        <label>MYG1</label>
    </interactant>
    <organismsDiffer>false</organismsDiffer>
    <experiments>3</experiments>
</comment>
<comment type="interaction">
    <interactant intactId="EBI-372506">
        <id>Q8TAE8</id>
    </interactant>
    <interactant intactId="EBI-7950783">
        <id>Q96JP2</id>
        <label>MYO15B</label>
    </interactant>
    <organismsDiffer>false</organismsDiffer>
    <experiments>3</experiments>
</comment>
<comment type="interaction">
    <interactant intactId="EBI-372506">
        <id>Q8TAE8</id>
    </interactant>
    <interactant intactId="EBI-10271199">
        <id>Q8NI38</id>
        <label>NFKBID</label>
    </interactant>
    <organismsDiffer>false</organismsDiffer>
    <experiments>3</experiments>
</comment>
<comment type="interaction">
    <interactant intactId="EBI-372506">
        <id>Q8TAE8</id>
    </interactant>
    <interactant intactId="EBI-741158">
        <id>Q96HA8</id>
        <label>NTAQ1</label>
    </interactant>
    <organismsDiffer>false</organismsDiffer>
    <experiments>3</experiments>
</comment>
<comment type="interaction">
    <interactant intactId="EBI-372506">
        <id>Q8TAE8</id>
    </interactant>
    <interactant intactId="EBI-536879">
        <id>O43482</id>
        <label>OIP5</label>
    </interactant>
    <organismsDiffer>false</organismsDiffer>
    <experiments>3</experiments>
</comment>
<comment type="interaction">
    <interactant intactId="EBI-372506">
        <id>Q8TAE8</id>
    </interactant>
    <interactant intactId="EBI-10302990">
        <id>Q9BYU1</id>
        <label>PBX4</label>
    </interactant>
    <organismsDiffer>false</organismsDiffer>
    <experiments>3</experiments>
</comment>
<comment type="interaction">
    <interactant intactId="EBI-372506">
        <id>Q8TAE8</id>
    </interactant>
    <interactant intactId="EBI-79165">
        <id>Q9NRD5</id>
        <label>PICK1</label>
    </interactant>
    <organismsDiffer>false</organismsDiffer>
    <experiments>3</experiments>
</comment>
<comment type="interaction">
    <interactant intactId="EBI-372506">
        <id>Q8TAE8</id>
    </interactant>
    <interactant intactId="EBI-302345">
        <id>Q8ND90</id>
        <label>PNMA1</label>
    </interactant>
    <organismsDiffer>false</organismsDiffer>
    <experiments>3</experiments>
</comment>
<comment type="interaction">
    <interactant intactId="EBI-372506">
        <id>Q8TAE8</id>
    </interactant>
    <interactant intactId="EBI-11320284">
        <id>Q9NQX0</id>
        <label>PRDM6</label>
    </interactant>
    <organismsDiffer>false</organismsDiffer>
    <experiments>3</experiments>
</comment>
<comment type="interaction">
    <interactant intactId="EBI-372506">
        <id>Q8TAE8</id>
    </interactant>
    <interactant intactId="EBI-372273">
        <id>P20618</id>
        <label>PSMB1</label>
    </interactant>
    <organismsDiffer>false</organismsDiffer>
    <experiments>3</experiments>
</comment>
<comment type="interaction">
    <interactant intactId="EBI-372506">
        <id>Q8TAE8</id>
    </interactant>
    <interactant intactId="EBI-741332">
        <id>P57052</id>
        <label>RBM11</label>
    </interactant>
    <organismsDiffer>false</organismsDiffer>
    <experiments>3</experiments>
</comment>
<comment type="interaction">
    <interactant intactId="EBI-372506">
        <id>Q8TAE8</id>
    </interactant>
    <interactant intactId="EBI-375617">
        <id>P02549</id>
        <label>SPTA1</label>
    </interactant>
    <organismsDiffer>false</organismsDiffer>
    <experiments>3</experiments>
</comment>
<comment type="interaction">
    <interactant intactId="EBI-372506">
        <id>Q8TAE8</id>
    </interactant>
    <interactant intactId="EBI-518675">
        <id>P40763</id>
        <label>STAT3</label>
    </interactant>
    <organismsDiffer>false</organismsDiffer>
    <experiments>4</experiments>
</comment>
<comment type="interaction">
    <interactant intactId="EBI-372506">
        <id>Q8TAE8</id>
    </interactant>
    <interactant intactId="EBI-1105213">
        <id>Q9UBB9</id>
        <label>TFIP11</label>
    </interactant>
    <organismsDiffer>false</organismsDiffer>
    <experiments>3</experiments>
</comment>
<comment type="interaction">
    <interactant intactId="EBI-372506">
        <id>Q8TAE8</id>
    </interactant>
    <interactant intactId="EBI-359224">
        <id>Q13077</id>
        <label>TRAF1</label>
    </interactant>
    <organismsDiffer>false</organismsDiffer>
    <experiments>3</experiments>
</comment>
<comment type="interaction">
    <interactant intactId="EBI-372506">
        <id>Q8TAE8</id>
    </interactant>
    <interactant intactId="EBI-719493">
        <id>P14373</id>
        <label>TRIM27</label>
    </interactant>
    <organismsDiffer>false</organismsDiffer>
    <experiments>3</experiments>
</comment>
<comment type="interaction">
    <interactant intactId="EBI-372506">
        <id>Q8TAE8</id>
    </interactant>
    <interactant intactId="EBI-743923">
        <id>O00308</id>
        <label>WWP2</label>
    </interactant>
    <organismsDiffer>false</organismsDiffer>
    <experiments>3</experiments>
</comment>
<comment type="interaction">
    <interactant intactId="EBI-372506">
        <id>Q8TAE8</id>
    </interactant>
    <interactant intactId="EBI-527853">
        <id>Q9UGI0</id>
        <label>ZRANB1</label>
    </interactant>
    <organismsDiffer>false</organismsDiffer>
    <experiments>3</experiments>
</comment>
<comment type="interaction">
    <interactant intactId="EBI-372506">
        <id>Q8TAE8</id>
    </interactant>
    <interactant intactId="EBI-2266938">
        <id>P22339</id>
        <label>Gadd45b</label>
    </interactant>
    <organismsDiffer>true</organismsDiffer>
    <experiments>3</experiments>
</comment>
<comment type="interaction">
    <interactant intactId="EBI-372506">
        <id>Q8TAE8</id>
    </interactant>
    <interactant intactId="EBI-602878">
        <id>P42227</id>
        <label>Stat3</label>
    </interactant>
    <organismsDiffer>true</organismsDiffer>
    <experiments>3</experiments>
</comment>
<comment type="subcellular location">
    <subcellularLocation>
        <location evidence="7 9 10 11">Mitochondrion</location>
    </subcellularLocation>
    <subcellularLocation>
        <location evidence="4">Nucleus</location>
    </subcellularLocation>
    <text evidence="4 7">Using N-terminally tagged constructs, has been found in the nucleus (PubMed:12482659). C-terminally tagged constructs are targeted exclusively to mitochondria (PubMed:22453275). This discrepancy may be explained by masking of a potential N-terminal mitochondrial targeting signal by the tag (PubMed:22453275).</text>
</comment>
<comment type="tissue specificity">
    <text evidence="5">Widely expressed. Highly expressed in the thyroid gland, heart, lymph nodes, trachea and adrenal tissues. Expressed at lower level in liver skeletal muscle, kidney, pancreas, testis, ovary and stomach. Barely detectable in adrenal adenoma and papillary thyroid cancer.</text>
</comment>
<comment type="induction">
    <text evidence="3">Down-regulated by p53/TP53 in apoptotic cells.</text>
</comment>
<comment type="miscellaneous">
    <text>Cells overexpressing GADD45GIP1 were more likely to be in G1 and less likely to be in S phase and grow more slowly than control cells. Inhibiting the expression of GADD45GIP1 promotes cell cycle progression.</text>
</comment>
<comment type="similarity">
    <text evidence="14">Belongs to the mitochondrion-specific ribosomal protein mL64 family.</text>
</comment>
<comment type="online information" name="Atlas of Genetics and Cytogenetics in Oncology and Haematology">
    <link uri="https://atlasgeneticsoncology.org/gene/40668/GADD45GIP1"/>
</comment>
<reference key="1">
    <citation type="journal article" date="2002" name="Virology">
        <title>Interaction of human papillomavirus type 16 L2 with cellular proteins: identification of novel nuclear body-associated proteins.</title>
        <authorList>
            <person name="Goernemann J."/>
            <person name="Hofmann T.G."/>
            <person name="Will H."/>
            <person name="Mueller M."/>
        </authorList>
    </citation>
    <scope>NUCLEOTIDE SEQUENCE [MRNA]</scope>
    <scope>SUBCELLULAR LOCATION</scope>
    <scope>INTERACTION WITH HPV16 L2 (MICROBIAL INFECTION)</scope>
    <source>
        <tissue>Keratinocyte</tissue>
    </source>
</reference>
<reference key="2">
    <citation type="journal article" date="2003" name="J. Biol. Chem.">
        <title>CR6-interacting factor 1 interacts with Gadd45 family proteins and modulates the cell cycle.</title>
        <authorList>
            <person name="Chung H.K."/>
            <person name="Yi Y.-W."/>
            <person name="Jung N.-C."/>
            <person name="Kim D."/>
            <person name="Suh J.M."/>
            <person name="Kim H."/>
            <person name="Park K.C."/>
            <person name="Song J.H."/>
            <person name="Kim D.W."/>
            <person name="Hwang E.S."/>
            <person name="Yoon S.-H."/>
            <person name="Bae Y.-S."/>
            <person name="Kim J.M."/>
            <person name="Bae I."/>
            <person name="Shong M."/>
        </authorList>
    </citation>
    <scope>NUCLEOTIDE SEQUENCE [MRNA]</scope>
    <scope>SUBCELLULAR LOCATION</scope>
    <scope>INTERACTION WITH GADD45A; GADD45B AND GADD45G</scope>
    <scope>TISSUE SPECIFICITY</scope>
    <source>
        <tissue>Colon carcinoma</tissue>
    </source>
</reference>
<reference key="3">
    <citation type="journal article" date="2004" name="Genome Res.">
        <title>The status, quality, and expansion of the NIH full-length cDNA project: the Mammalian Gene Collection (MGC).</title>
        <authorList>
            <consortium name="The MGC Project Team"/>
        </authorList>
    </citation>
    <scope>NUCLEOTIDE SEQUENCE [LARGE SCALE MRNA]</scope>
    <source>
        <tissue>Lung</tissue>
        <tissue>Muscle</tissue>
        <tissue>Skin</tissue>
    </source>
</reference>
<reference key="4">
    <citation type="submission" date="2003-01" db="EMBL/GenBank/DDBJ databases">
        <title>Full length sequencing of some human and murine muscular transcripts (Telethon Italy project B41).</title>
        <authorList>
            <person name="Frigimelica E."/>
            <person name="Lanfranchi G."/>
        </authorList>
    </citation>
    <scope>NUCLEOTIDE SEQUENCE [LARGE SCALE MRNA] OF 7-222</scope>
</reference>
<reference key="5">
    <citation type="journal article" date="1999" name="Biochem. Biophys. Res. Commun.">
        <title>Isolation of differentially expressed cDNAs from p53-dependent apoptotic cells: activation of the human homologue of the Drosophila peroxidasin gene.</title>
        <authorList>
            <person name="Horikoshi N."/>
            <person name="Cong J."/>
            <person name="Kley N."/>
            <person name="Shenk T."/>
        </authorList>
    </citation>
    <scope>NUCLEOTIDE SEQUENCE [MRNA] OF 90-122</scope>
    <scope>INDUCTION</scope>
</reference>
<reference key="6">
    <citation type="journal article" date="2005" name="Mol. Endocrinol.">
        <title>CR6-interacting factor 1 interacts with orphan nuclear receptor Nur77 and inhibits its transactivation.</title>
        <authorList>
            <person name="Park K.C."/>
            <person name="Song K.-H."/>
            <person name="Chung H.K."/>
            <person name="Kim H."/>
            <person name="Kim D.W."/>
            <person name="Song J.H."/>
            <person name="Hwang E.S."/>
            <person name="Jung H.S."/>
            <person name="Park S.-H."/>
            <person name="Bae I."/>
            <person name="Lee I.K."/>
            <person name="Choi H.-S."/>
            <person name="Shong M."/>
        </authorList>
    </citation>
    <scope>INTERACTION WITH NR4A1/NUR77</scope>
</reference>
<reference key="7">
    <citation type="journal article" date="2009" name="Mol. Cell. Proteomics">
        <title>Large-scale proteomics analysis of the human kinome.</title>
        <authorList>
            <person name="Oppermann F.S."/>
            <person name="Gnad F."/>
            <person name="Olsen J.V."/>
            <person name="Hornberger R."/>
            <person name="Greff Z."/>
            <person name="Keri G."/>
            <person name="Mann M."/>
            <person name="Daub H."/>
        </authorList>
    </citation>
    <scope>IDENTIFICATION BY MASS SPECTROMETRY [LARGE SCALE ANALYSIS]</scope>
</reference>
<reference key="8">
    <citation type="journal article" date="2010" name="Sci. Signal.">
        <title>Quantitative phosphoproteomics reveals widespread full phosphorylation site occupancy during mitosis.</title>
        <authorList>
            <person name="Olsen J.V."/>
            <person name="Vermeulen M."/>
            <person name="Santamaria A."/>
            <person name="Kumar C."/>
            <person name="Miller M.L."/>
            <person name="Jensen L.J."/>
            <person name="Gnad F."/>
            <person name="Cox J."/>
            <person name="Jensen T.S."/>
            <person name="Nigg E.A."/>
            <person name="Brunak S."/>
            <person name="Mann M."/>
        </authorList>
    </citation>
    <scope>IDENTIFICATION BY MASS SPECTROMETRY [LARGE SCALE ANALYSIS]</scope>
    <source>
        <tissue>Cervix carcinoma</tissue>
    </source>
</reference>
<reference key="9">
    <citation type="journal article" date="2011" name="BMC Syst. Biol.">
        <title>Initial characterization of the human central proteome.</title>
        <authorList>
            <person name="Burkard T.R."/>
            <person name="Planyavsky M."/>
            <person name="Kaupe I."/>
            <person name="Breitwieser F.P."/>
            <person name="Buerckstuemmer T."/>
            <person name="Bennett K.L."/>
            <person name="Superti-Furga G."/>
            <person name="Colinge J."/>
        </authorList>
    </citation>
    <scope>IDENTIFICATION BY MASS SPECTROMETRY [LARGE SCALE ANALYSIS]</scope>
</reference>
<reference key="10">
    <citation type="journal article" date="2012" name="Nucleic Acids Res.">
        <title>Mitochondrial nucleoid interacting proteins support mitochondrial protein synthesis.</title>
        <authorList>
            <person name="He J."/>
            <person name="Cooper H.M."/>
            <person name="Reyes A."/>
            <person name="Di Re M."/>
            <person name="Sembongi H."/>
            <person name="Litwin T.R."/>
            <person name="Gao J."/>
            <person name="Neuman K.C."/>
            <person name="Fearnley I.M."/>
            <person name="Spinazzola A."/>
            <person name="Walker J.E."/>
            <person name="Holt I.J."/>
        </authorList>
    </citation>
    <scope>INTERACTION WITH ATAD3A AND ATAD3B</scope>
    <scope>SUBCELLULAR LOCATION</scope>
</reference>
<reference key="11">
    <citation type="journal article" date="2013" name="Front. Physiol.">
        <title>Identification and characterization of CHCHD1, AURKAIP1, and CRIF1 as new members of the mammalian mitochondrial ribosome.</title>
        <authorList>
            <person name="Koc E.C."/>
            <person name="Cimen H."/>
            <person name="Kumcuoglu B."/>
            <person name="Abu N."/>
            <person name="Akpinar G."/>
            <person name="Haque M.E."/>
            <person name="Spremulli L.L."/>
            <person name="Koc H."/>
        </authorList>
    </citation>
    <scope>SUBUNIT</scope>
    <scope>SUBCELLULAR LOCATION</scope>
</reference>
<reference key="12">
    <citation type="journal article" date="2015" name="Proteomics">
        <title>N-terminome analysis of the human mitochondrial proteome.</title>
        <authorList>
            <person name="Vaca Jacome A.S."/>
            <person name="Rabilloud T."/>
            <person name="Schaeffer-Reiss C."/>
            <person name="Rompais M."/>
            <person name="Ayoub D."/>
            <person name="Lane L."/>
            <person name="Bairoch A."/>
            <person name="Van Dorsselaer A."/>
            <person name="Carapito C."/>
        </authorList>
    </citation>
    <scope>IDENTIFICATION BY MASS SPECTROMETRY [LARGE SCALE ANALYSIS]</scope>
</reference>
<reference key="13">
    <citation type="journal article" date="2016" name="Annu. Rev. Biochem.">
        <title>Structure and function of the mitochondrial ribosome.</title>
        <authorList>
            <person name="Greber B.J."/>
            <person name="Ban N."/>
        </authorList>
    </citation>
    <scope>NOMENCLATURE</scope>
</reference>
<reference evidence="15" key="14">
    <citation type="journal article" date="2014" name="Science">
        <title>Structure of the large ribosomal subunit from human mitochondria.</title>
        <authorList>
            <person name="Brown A."/>
            <person name="Amunts A."/>
            <person name="Bai X.C."/>
            <person name="Sugimoto Y."/>
            <person name="Edwards P.C."/>
            <person name="Murshudov G."/>
            <person name="Scheres S.H."/>
            <person name="Ramakrishnan V."/>
        </authorList>
    </citation>
    <scope>STRUCTURE BY ELECTRON MICROSCOPY (3.40 ANGSTROMS)</scope>
    <scope>SUBCELLULAR LOCATION</scope>
    <scope>SUBUNIT</scope>
</reference>
<reference evidence="16" key="15">
    <citation type="journal article" date="2015" name="Science">
        <title>Ribosome. The structure of the human mitochondrial ribosome.</title>
        <authorList>
            <person name="Amunts A."/>
            <person name="Brown A."/>
            <person name="Toots J."/>
            <person name="Scheres S.H."/>
            <person name="Ramakrishnan V."/>
        </authorList>
    </citation>
    <scope>STRUCTURE BY ELECTRON MICROSCOPY (3.50 ANGSTROMS)</scope>
    <scope>SUBCELLULAR LOCATION</scope>
    <scope>SUBUNIT</scope>
</reference>
<reference evidence="17 18" key="16">
    <citation type="journal article" date="2017" name="Nat. Struct. Mol. Biol.">
        <title>Structures of the human mitochondrial ribosome in native states of assembly.</title>
        <authorList>
            <person name="Brown A."/>
            <person name="Rathore S."/>
            <person name="Kimanius D."/>
            <person name="Aibara S."/>
            <person name="Bai X.C."/>
            <person name="Rorbach J."/>
            <person name="Amunts A."/>
            <person name="Ramakrishnan V."/>
        </authorList>
    </citation>
    <scope>STRUCTURE BY ELECTRON MICROSCOPY (3.03 ANGSTROMS)</scope>
    <scope>SUBCELLULAR LOCATION</scope>
    <scope>SUBUNIT</scope>
</reference>
<reference evidence="19 20" key="17">
    <citation type="journal article" date="2022" name="Nat. Commun.">
        <title>A late-stage assembly checkpoint of the human mitochondrial ribosome large subunit.</title>
        <authorList>
            <person name="Rebelo-Guiomar P."/>
            <person name="Pellegrino S."/>
            <person name="Dent K.C."/>
            <person name="Sas-Chen A."/>
            <person name="Miller-Fleming L."/>
            <person name="Garone C."/>
            <person name="Van Haute L."/>
            <person name="Rogan J.F."/>
            <person name="Dinan A."/>
            <person name="Firth A.E."/>
            <person name="Andrews B."/>
            <person name="Whitworth A.J."/>
            <person name="Schwartz S."/>
            <person name="Warren A.J."/>
            <person name="Minczuk M."/>
        </authorList>
    </citation>
    <scope>STRUCTURE BY ELECTRON MICROSCOPY (2.9 ANGSTROMS) IN COMPLEX WITH MTLSU</scope>
    <scope>SUBUNIT</scope>
</reference>
<sequence>MAASVRQARSLLGVAATLAPGSRGYRARPPPRRRPGPRWPDPEDLLTPRWQLGPRYAAKQFARYGAASGVVPGSLWPSPEQLRELEAEEREWYPSLATMQESLRVKQLAEEQKRREREQHIAECMAKMPQMIVNWQQQQRENWEKAQADKERRARLQAEAQELLGYQVDPRSARFQELLQDLEKKERKRLKEEKQKRKKEARAAALAAAVAQDPAASGAPSS</sequence>
<protein>
    <recommendedName>
        <fullName evidence="13">Large ribosomal subunit protein mL64</fullName>
    </recommendedName>
    <alternativeName>
        <fullName>39S ribosomal protein L59, mitochondrial</fullName>
        <shortName>MRP-L59</shortName>
    </alternativeName>
    <alternativeName>
        <fullName>CKII beta-associating protein</fullName>
    </alternativeName>
    <alternativeName>
        <fullName>CR6-interacting factor 1</fullName>
        <shortName>CRIF1</shortName>
    </alternativeName>
    <alternativeName>
        <fullName>Growth arrest and DNA damage-inducible proteins-interacting protein 1</fullName>
    </alternativeName>
    <alternativeName>
        <fullName>Papillomavirus L2-interacting nuclear protein 1</fullName>
        <shortName>PLINP</shortName>
        <shortName>PLINP-1</shortName>
    </alternativeName>
    <alternativeName>
        <fullName>p53-responsive gene 6 protein</fullName>
    </alternativeName>
</protein>
<evidence type="ECO:0000255" key="1"/>
<evidence type="ECO:0000256" key="2">
    <source>
        <dbReference type="SAM" id="MobiDB-lite"/>
    </source>
</evidence>
<evidence type="ECO:0000269" key="3">
    <source>
    </source>
</evidence>
<evidence type="ECO:0000269" key="4">
    <source>
    </source>
</evidence>
<evidence type="ECO:0000269" key="5">
    <source>
    </source>
</evidence>
<evidence type="ECO:0000269" key="6">
    <source>
    </source>
</evidence>
<evidence type="ECO:0000269" key="7">
    <source>
    </source>
</evidence>
<evidence type="ECO:0000269" key="8">
    <source>
    </source>
</evidence>
<evidence type="ECO:0000269" key="9">
    <source>
    </source>
</evidence>
<evidence type="ECO:0000269" key="10">
    <source>
    </source>
</evidence>
<evidence type="ECO:0000269" key="11">
    <source>
    </source>
</evidence>
<evidence type="ECO:0000269" key="12">
    <source>
    </source>
</evidence>
<evidence type="ECO:0000303" key="13">
    <source>
    </source>
</evidence>
<evidence type="ECO:0000305" key="14"/>
<evidence type="ECO:0007744" key="15">
    <source>
        <dbReference type="PDB" id="3J7Y"/>
    </source>
</evidence>
<evidence type="ECO:0007744" key="16">
    <source>
        <dbReference type="PDB" id="3J9M"/>
    </source>
</evidence>
<evidence type="ECO:0007744" key="17">
    <source>
        <dbReference type="PDB" id="5OOL"/>
    </source>
</evidence>
<evidence type="ECO:0007744" key="18">
    <source>
        <dbReference type="PDB" id="5OOM"/>
    </source>
</evidence>
<evidence type="ECO:0007744" key="19">
    <source>
        <dbReference type="PDB" id="7QH6"/>
    </source>
</evidence>
<evidence type="ECO:0007744" key="20">
    <source>
        <dbReference type="PDB" id="7QH7"/>
    </source>
</evidence>
<evidence type="ECO:0007829" key="21">
    <source>
        <dbReference type="PDB" id="7OF0"/>
    </source>
</evidence>
<evidence type="ECO:0007829" key="22">
    <source>
        <dbReference type="PDB" id="7OIA"/>
    </source>
</evidence>
<evidence type="ECO:0007829" key="23">
    <source>
        <dbReference type="PDB" id="7QH6"/>
    </source>
</evidence>
<evidence type="ECO:0007829" key="24">
    <source>
        <dbReference type="PDB" id="8QU5"/>
    </source>
</evidence>